<proteinExistence type="evidence at protein level"/>
<gene>
    <name type="primary">POLR2I</name>
</gene>
<feature type="chain" id="PRO_0000245341" description="DNA-directed RNA polymerase II subunit RPB9">
    <location>
        <begin position="1"/>
        <end position="125"/>
    </location>
</feature>
<feature type="zinc finger region" description="C4-type" evidence="2">
    <location>
        <begin position="17"/>
        <end position="42"/>
    </location>
</feature>
<feature type="zinc finger region" description="TFIIS-type" evidence="3">
    <location>
        <begin position="82"/>
        <end position="124"/>
    </location>
</feature>
<feature type="binding site" evidence="4 6 7 9 10">
    <location>
        <position position="17"/>
    </location>
    <ligand>
        <name>Zn(2+)</name>
        <dbReference type="ChEBI" id="CHEBI:29105"/>
        <label>1</label>
    </ligand>
</feature>
<feature type="binding site" evidence="4 6 7 9 10">
    <location>
        <position position="20"/>
    </location>
    <ligand>
        <name>Zn(2+)</name>
        <dbReference type="ChEBI" id="CHEBI:29105"/>
        <label>1</label>
    </ligand>
</feature>
<feature type="binding site" evidence="4 6 7 9 10">
    <location>
        <position position="39"/>
    </location>
    <ligand>
        <name>Zn(2+)</name>
        <dbReference type="ChEBI" id="CHEBI:29105"/>
        <label>1</label>
    </ligand>
</feature>
<feature type="binding site" evidence="4 6 7 9 10">
    <location>
        <position position="42"/>
    </location>
    <ligand>
        <name>Zn(2+)</name>
        <dbReference type="ChEBI" id="CHEBI:29105"/>
        <label>1</label>
    </ligand>
</feature>
<feature type="binding site" evidence="3 6 7 9 10">
    <location>
        <position position="86"/>
    </location>
    <ligand>
        <name>Zn(2+)</name>
        <dbReference type="ChEBI" id="CHEBI:29105"/>
        <label>2</label>
    </ligand>
</feature>
<feature type="binding site" evidence="3 6 7 9 10">
    <location>
        <position position="89"/>
    </location>
    <ligand>
        <name>Zn(2+)</name>
        <dbReference type="ChEBI" id="CHEBI:29105"/>
        <label>2</label>
    </ligand>
</feature>
<feature type="binding site" evidence="3 6 9">
    <location>
        <position position="114"/>
    </location>
    <ligand>
        <name>Zn(2+)</name>
        <dbReference type="ChEBI" id="CHEBI:29105"/>
        <label>2</label>
    </ligand>
</feature>
<feature type="binding site" evidence="3 6 7 9 10">
    <location>
        <position position="119"/>
    </location>
    <ligand>
        <name>Zn(2+)</name>
        <dbReference type="ChEBI" id="CHEBI:29105"/>
        <label>2</label>
    </ligand>
</feature>
<feature type="modified residue" description="N-acetylmethionine" evidence="1">
    <location>
        <position position="1"/>
    </location>
</feature>
<feature type="strand" evidence="11">
    <location>
        <begin position="18"/>
        <end position="20"/>
    </location>
</feature>
<feature type="strand" evidence="11">
    <location>
        <begin position="25"/>
        <end position="28"/>
    </location>
</feature>
<feature type="turn" evidence="11">
    <location>
        <begin position="30"/>
        <end position="32"/>
    </location>
</feature>
<feature type="strand" evidence="11">
    <location>
        <begin position="35"/>
        <end position="38"/>
    </location>
</feature>
<feature type="strand" evidence="11">
    <location>
        <begin position="40"/>
        <end position="42"/>
    </location>
</feature>
<feature type="strand" evidence="11">
    <location>
        <begin position="45"/>
        <end position="47"/>
    </location>
</feature>
<feature type="strand" evidence="11">
    <location>
        <begin position="52"/>
        <end position="59"/>
    </location>
</feature>
<feature type="helix" evidence="11">
    <location>
        <begin position="64"/>
        <end position="66"/>
    </location>
</feature>
<feature type="helix" evidence="11">
    <location>
        <begin position="70"/>
        <end position="74"/>
    </location>
</feature>
<feature type="strand" evidence="11">
    <location>
        <begin position="80"/>
        <end position="84"/>
    </location>
</feature>
<feature type="strand" evidence="11">
    <location>
        <begin position="87"/>
        <end position="89"/>
    </location>
</feature>
<feature type="strand" evidence="11">
    <location>
        <begin position="94"/>
        <end position="97"/>
    </location>
</feature>
<feature type="strand" evidence="11">
    <location>
        <begin position="111"/>
        <end position="114"/>
    </location>
</feature>
<feature type="strand" evidence="11">
    <location>
        <begin position="122"/>
        <end position="124"/>
    </location>
</feature>
<name>RPB9_BOVIN</name>
<sequence>MEPDGTYEPGIVGIRFCQECNNMLYPKEDKENRILLYACRNCDYQQEADNSCIYVNKITHEVDELTQIIADVSQDPTLPRTEDHPCQKCGHKEAVFFQSHSARAEDAMRLYYVCTAPHCGHRWTE</sequence>
<dbReference type="EMBL" id="BC108233">
    <property type="protein sequence ID" value="AAI08234.1"/>
    <property type="molecule type" value="mRNA"/>
</dbReference>
<dbReference type="RefSeq" id="NP_001069797.1">
    <property type="nucleotide sequence ID" value="NM_001076329.2"/>
</dbReference>
<dbReference type="PDB" id="5FLM">
    <property type="method" value="EM"/>
    <property type="resolution" value="3.40 A"/>
    <property type="chains" value="I=1-125"/>
</dbReference>
<dbReference type="PDB" id="5OIK">
    <property type="method" value="EM"/>
    <property type="resolution" value="3.70 A"/>
    <property type="chains" value="I=1-125"/>
</dbReference>
<dbReference type="PDBsum" id="5FLM"/>
<dbReference type="PDBsum" id="5OIK"/>
<dbReference type="EMDB" id="EMD-3817"/>
<dbReference type="SMR" id="Q32P73"/>
<dbReference type="DIP" id="DIP-61194N"/>
<dbReference type="FunCoup" id="Q32P73">
    <property type="interactions" value="293"/>
</dbReference>
<dbReference type="IntAct" id="Q32P73">
    <property type="interactions" value="3"/>
</dbReference>
<dbReference type="STRING" id="9913.ENSBTAP00000019969"/>
<dbReference type="PaxDb" id="9913-ENSBTAP00000019969"/>
<dbReference type="GeneID" id="614472"/>
<dbReference type="KEGG" id="bta:614472"/>
<dbReference type="CTD" id="5438"/>
<dbReference type="eggNOG" id="KOG2691">
    <property type="taxonomic scope" value="Eukaryota"/>
</dbReference>
<dbReference type="InParanoid" id="Q32P73"/>
<dbReference type="OrthoDB" id="282270at2759"/>
<dbReference type="EvolutionaryTrace" id="Q32P73"/>
<dbReference type="Proteomes" id="UP000009136">
    <property type="component" value="Unplaced"/>
</dbReference>
<dbReference type="GO" id="GO:0005730">
    <property type="term" value="C:nucleolus"/>
    <property type="evidence" value="ECO:0007669"/>
    <property type="project" value="UniProtKB-SubCell"/>
</dbReference>
<dbReference type="GO" id="GO:0005634">
    <property type="term" value="C:nucleus"/>
    <property type="evidence" value="ECO:0000250"/>
    <property type="project" value="UniProtKB"/>
</dbReference>
<dbReference type="GO" id="GO:0005665">
    <property type="term" value="C:RNA polymerase II, core complex"/>
    <property type="evidence" value="ECO:0000314"/>
    <property type="project" value="UniProtKB"/>
</dbReference>
<dbReference type="GO" id="GO:0003899">
    <property type="term" value="F:DNA-directed RNA polymerase activity"/>
    <property type="evidence" value="ECO:0007669"/>
    <property type="project" value="InterPro"/>
</dbReference>
<dbReference type="GO" id="GO:0003676">
    <property type="term" value="F:nucleic acid binding"/>
    <property type="evidence" value="ECO:0007669"/>
    <property type="project" value="InterPro"/>
</dbReference>
<dbReference type="GO" id="GO:0008270">
    <property type="term" value="F:zinc ion binding"/>
    <property type="evidence" value="ECO:0000314"/>
    <property type="project" value="UniProtKB"/>
</dbReference>
<dbReference type="GO" id="GO:0001193">
    <property type="term" value="P:maintenance of transcriptional fidelity during transcription elongation by RNA polymerase II"/>
    <property type="evidence" value="ECO:0000318"/>
    <property type="project" value="GO_Central"/>
</dbReference>
<dbReference type="GO" id="GO:0006366">
    <property type="term" value="P:transcription by RNA polymerase II"/>
    <property type="evidence" value="ECO:0000250"/>
    <property type="project" value="UniProtKB"/>
</dbReference>
<dbReference type="GO" id="GO:0006367">
    <property type="term" value="P:transcription initiation at RNA polymerase II promoter"/>
    <property type="evidence" value="ECO:0000318"/>
    <property type="project" value="GO_Central"/>
</dbReference>
<dbReference type="GO" id="GO:0006283">
    <property type="term" value="P:transcription-coupled nucleotide-excision repair"/>
    <property type="evidence" value="ECO:0000318"/>
    <property type="project" value="GO_Central"/>
</dbReference>
<dbReference type="CDD" id="cd10508">
    <property type="entry name" value="Zn-ribbon_RPB9"/>
    <property type="match status" value="1"/>
</dbReference>
<dbReference type="FunFam" id="2.20.25.10:FF:000004">
    <property type="entry name" value="DNA-directed RNA polymerase subunit"/>
    <property type="match status" value="1"/>
</dbReference>
<dbReference type="FunFam" id="2.20.25.10:FF:000009">
    <property type="entry name" value="DNA-directed RNA polymerase subunit"/>
    <property type="match status" value="1"/>
</dbReference>
<dbReference type="Gene3D" id="2.20.25.10">
    <property type="match status" value="2"/>
</dbReference>
<dbReference type="InterPro" id="IPR019761">
    <property type="entry name" value="DNA-dir_RNA_pol-M_15_CS"/>
</dbReference>
<dbReference type="InterPro" id="IPR012164">
    <property type="entry name" value="Rpa12/Rpb9/Rpc10/TFS"/>
</dbReference>
<dbReference type="InterPro" id="IPR001529">
    <property type="entry name" value="Zn_ribbon_RPB9"/>
</dbReference>
<dbReference type="InterPro" id="IPR034012">
    <property type="entry name" value="Zn_ribbon_RPB9_C"/>
</dbReference>
<dbReference type="InterPro" id="IPR001222">
    <property type="entry name" value="Znf_TFIIS"/>
</dbReference>
<dbReference type="PANTHER" id="PTHR11239">
    <property type="entry name" value="DNA-DIRECTED RNA POLYMERASE"/>
    <property type="match status" value="1"/>
</dbReference>
<dbReference type="PANTHER" id="PTHR11239:SF1">
    <property type="entry name" value="DNA-DIRECTED RNA POLYMERASE II SUBUNIT RPB9"/>
    <property type="match status" value="1"/>
</dbReference>
<dbReference type="Pfam" id="PF02150">
    <property type="entry name" value="Zn_ribbon_RPB9"/>
    <property type="match status" value="1"/>
</dbReference>
<dbReference type="Pfam" id="PF01096">
    <property type="entry name" value="Zn_ribbon_TFIIS"/>
    <property type="match status" value="1"/>
</dbReference>
<dbReference type="PIRSF" id="PIRSF005586">
    <property type="entry name" value="RNApol_RpoM"/>
    <property type="match status" value="1"/>
</dbReference>
<dbReference type="SMART" id="SM00661">
    <property type="entry name" value="RPOL9"/>
    <property type="match status" value="1"/>
</dbReference>
<dbReference type="SMART" id="SM00440">
    <property type="entry name" value="ZnF_C2C2"/>
    <property type="match status" value="1"/>
</dbReference>
<dbReference type="SUPFAM" id="SSF57783">
    <property type="entry name" value="Zinc beta-ribbon"/>
    <property type="match status" value="2"/>
</dbReference>
<dbReference type="PROSITE" id="PS01030">
    <property type="entry name" value="RNA_POL_M_15KD"/>
    <property type="match status" value="1"/>
</dbReference>
<dbReference type="PROSITE" id="PS00466">
    <property type="entry name" value="ZF_TFIIS_1"/>
    <property type="match status" value="1"/>
</dbReference>
<dbReference type="PROSITE" id="PS51133">
    <property type="entry name" value="ZF_TFIIS_2"/>
    <property type="match status" value="1"/>
</dbReference>
<protein>
    <recommendedName>
        <fullName>DNA-directed RNA polymerase II subunit RPB9</fullName>
        <shortName>RNA polymerase II subunit B9</shortName>
    </recommendedName>
    <alternativeName>
        <fullName>DNA-directed RNA polymerase II subunit I</fullName>
    </alternativeName>
</protein>
<organism>
    <name type="scientific">Bos taurus</name>
    <name type="common">Bovine</name>
    <dbReference type="NCBI Taxonomy" id="9913"/>
    <lineage>
        <taxon>Eukaryota</taxon>
        <taxon>Metazoa</taxon>
        <taxon>Chordata</taxon>
        <taxon>Craniata</taxon>
        <taxon>Vertebrata</taxon>
        <taxon>Euteleostomi</taxon>
        <taxon>Mammalia</taxon>
        <taxon>Eutheria</taxon>
        <taxon>Laurasiatheria</taxon>
        <taxon>Artiodactyla</taxon>
        <taxon>Ruminantia</taxon>
        <taxon>Pecora</taxon>
        <taxon>Bovidae</taxon>
        <taxon>Bovinae</taxon>
        <taxon>Bos</taxon>
    </lineage>
</organism>
<accession>Q32P73</accession>
<evidence type="ECO:0000250" key="1">
    <source>
        <dbReference type="UniProtKB" id="P36954"/>
    </source>
</evidence>
<evidence type="ECO:0000255" key="2"/>
<evidence type="ECO:0000255" key="3">
    <source>
        <dbReference type="PROSITE-ProRule" id="PRU00472"/>
    </source>
</evidence>
<evidence type="ECO:0000255" key="4">
    <source>
        <dbReference type="PROSITE-ProRule" id="PRU10145"/>
    </source>
</evidence>
<evidence type="ECO:0000269" key="5">
    <source>
    </source>
</evidence>
<evidence type="ECO:0000269" key="6">
    <source>
    </source>
</evidence>
<evidence type="ECO:0000269" key="7">
    <source>
    </source>
</evidence>
<evidence type="ECO:0000305" key="8"/>
<evidence type="ECO:0007744" key="9">
    <source>
        <dbReference type="PDB" id="5FLM"/>
    </source>
</evidence>
<evidence type="ECO:0007744" key="10">
    <source>
        <dbReference type="PDB" id="5OIK"/>
    </source>
</evidence>
<evidence type="ECO:0007829" key="11">
    <source>
        <dbReference type="PDB" id="5FLM"/>
    </source>
</evidence>
<keyword id="KW-0002">3D-structure</keyword>
<keyword id="KW-0007">Acetylation</keyword>
<keyword id="KW-0240">DNA-directed RNA polymerase</keyword>
<keyword id="KW-0479">Metal-binding</keyword>
<keyword id="KW-0539">Nucleus</keyword>
<keyword id="KW-1185">Reference proteome</keyword>
<keyword id="KW-0804">Transcription</keyword>
<keyword id="KW-0862">Zinc</keyword>
<keyword id="KW-0863">Zinc-finger</keyword>
<comment type="function">
    <text evidence="5 6">DNA-dependent RNA polymerase catalyzes the transcription of DNA into RNA using the four ribonucleoside triphosphates as substrates. Component of RNA polymerase II which synthesizes mRNA precursors and many functional non-coding RNAs. Pol II is the central component of the basal RNA polymerase II transcription machinery. It is composed of mobile elements that move relative to each other. POLR2I/RPB9 is part of the upper jaw surrounding the central large cleft and thought to grab the incoming DNA template.</text>
</comment>
<comment type="subunit">
    <text evidence="5 6 7">Component of the RNA polymerase II (Pol II) core complex consisting of 12 subunits: a ten-subunit catalytic core composed of POLR2A/RPB1, POLR2B/RPB2, POLR2C/RPB3, POLR2I/RPB9, POLR2J/RPB11, POLR2E/RPABC1, POLR2F/RPABC2, POLR2H/RPABC3, POLR2K/RPABC4 and POLR2L/RPABC5 and a mobile stalk composed of two subunits POLR2D/RPB4 and POLR2G/RPB7, protruding from the core and functioning primarily in transcription initiation. Part of Pol II(G) complex, in which Pol II core associates with an additional subunit POLR2M; unlike conventional Pol II, Pol II(G) functions as a transcriptional repressor. Part of TBP-based Pol II pre-initiation complex (PIC), in which Pol II core assembles with general transcription factors and other specific initiation factors including GTF2E1, GTF2E2, GTF2F1, GTF2F2, TCEA1, ERCC2, ERCC3, GTF2H2, GTF2H3, GTF2H4, GTF2H5, GTF2A1, GTF2A2, GTF2B and TBP; this large multi-subunit PIC complex mediates DNA unwinding and targets Pol II core to the transcription start site where the first phosphodiester bond forms.</text>
</comment>
<comment type="subcellular location">
    <subcellularLocation>
        <location evidence="1">Nucleus</location>
        <location evidence="1">Nucleolus</location>
    </subcellularLocation>
</comment>
<comment type="similarity">
    <text evidence="8">Belongs to the archaeal RpoM/eukaryotic RPA12/RPB9/RPC11 RNA polymerase family.</text>
</comment>
<reference key="1">
    <citation type="submission" date="2005-10" db="EMBL/GenBank/DDBJ databases">
        <authorList>
            <consortium name="NIH - Mammalian Gene Collection (MGC) project"/>
        </authorList>
    </citation>
    <scope>NUCLEOTIDE SEQUENCE [LARGE SCALE MRNA]</scope>
    <source>
        <strain>Crossbred X Angus</strain>
        <tissue>Liver</tissue>
    </source>
</reference>
<reference key="2">
    <citation type="journal article" date="2006" name="Proc. Natl. Acad. Sci. U.S.A.">
        <title>A Mediator-responsive form of metazoan RNA polymerase II.</title>
        <authorList>
            <person name="Hu X."/>
            <person name="Malik S."/>
            <person name="Negroiu C.C."/>
            <person name="Hubbard K."/>
            <person name="Velalar C.N."/>
            <person name="Hampton B."/>
            <person name="Grosu D."/>
            <person name="Catalano J."/>
            <person name="Roeder R.G."/>
            <person name="Gnatt A."/>
        </authorList>
    </citation>
    <scope>FUNCTION OF POL II</scope>
    <scope>SUBUNIT</scope>
    <scope>IDENTIFICATION IN THE POL II AND POL II(G) COMPLEXES</scope>
</reference>
<reference key="3">
    <citation type="journal article" date="2016" name="Nature">
        <title>Structure of transcribing mammalian RNA polymerase II.</title>
        <authorList>
            <person name="Bernecky C."/>
            <person name="Herzog F."/>
            <person name="Baumeister W."/>
            <person name="Plitzko J.M."/>
            <person name="Cramer P."/>
        </authorList>
    </citation>
    <scope>STRUCTURE BY ELECTRON MICROSCOPY (3.40 ANGSTROMS) IN COMPLEX WITH ZN(2+)</scope>
    <scope>SUBUNIT</scope>
    <scope>FUNCTION OF POL II</scope>
</reference>
<reference key="4">
    <citation type="journal article" date="2017" name="Nat. Struct. Mol. Biol.">
        <title>Structure of a transcribing RNA polymerase II-DSIF complex reveals a multidentate DNA-RNA clamp.</title>
        <authorList>
            <person name="Bernecky C."/>
            <person name="Plitzko J.M."/>
            <person name="Cramer P."/>
        </authorList>
    </citation>
    <scope>STRUCTURE BY ELECTRON MICROSCOPY (3.70 ANGSTROMS) IN COMPLEX WITH ZN(2+)</scope>
    <scope>SUBUNIT</scope>
</reference>